<organism>
    <name type="scientific">Neurospora crassa (strain ATCC 24698 / 74-OR23-1A / CBS 708.71 / DSM 1257 / FGSC 987)</name>
    <dbReference type="NCBI Taxonomy" id="367110"/>
    <lineage>
        <taxon>Eukaryota</taxon>
        <taxon>Fungi</taxon>
        <taxon>Dikarya</taxon>
        <taxon>Ascomycota</taxon>
        <taxon>Pezizomycotina</taxon>
        <taxon>Sordariomycetes</taxon>
        <taxon>Sordariomycetidae</taxon>
        <taxon>Sordariales</taxon>
        <taxon>Sordariaceae</taxon>
        <taxon>Neurospora</taxon>
    </lineage>
</organism>
<reference key="1">
    <citation type="journal article" date="2003" name="Nature">
        <title>The genome sequence of the filamentous fungus Neurospora crassa.</title>
        <authorList>
            <person name="Galagan J.E."/>
            <person name="Calvo S.E."/>
            <person name="Borkovich K.A."/>
            <person name="Selker E.U."/>
            <person name="Read N.D."/>
            <person name="Jaffe D.B."/>
            <person name="FitzHugh W."/>
            <person name="Ma L.-J."/>
            <person name="Smirnov S."/>
            <person name="Purcell S."/>
            <person name="Rehman B."/>
            <person name="Elkins T."/>
            <person name="Engels R."/>
            <person name="Wang S."/>
            <person name="Nielsen C.B."/>
            <person name="Butler J."/>
            <person name="Endrizzi M."/>
            <person name="Qui D."/>
            <person name="Ianakiev P."/>
            <person name="Bell-Pedersen D."/>
            <person name="Nelson M.A."/>
            <person name="Werner-Washburne M."/>
            <person name="Selitrennikoff C.P."/>
            <person name="Kinsey J.A."/>
            <person name="Braun E.L."/>
            <person name="Zelter A."/>
            <person name="Schulte U."/>
            <person name="Kothe G.O."/>
            <person name="Jedd G."/>
            <person name="Mewes H.-W."/>
            <person name="Staben C."/>
            <person name="Marcotte E."/>
            <person name="Greenberg D."/>
            <person name="Roy A."/>
            <person name="Foley K."/>
            <person name="Naylor J."/>
            <person name="Stange-Thomann N."/>
            <person name="Barrett R."/>
            <person name="Gnerre S."/>
            <person name="Kamal M."/>
            <person name="Kamvysselis M."/>
            <person name="Mauceli E.W."/>
            <person name="Bielke C."/>
            <person name="Rudd S."/>
            <person name="Frishman D."/>
            <person name="Krystofova S."/>
            <person name="Rasmussen C."/>
            <person name="Metzenberg R.L."/>
            <person name="Perkins D.D."/>
            <person name="Kroken S."/>
            <person name="Cogoni C."/>
            <person name="Macino G."/>
            <person name="Catcheside D.E.A."/>
            <person name="Li W."/>
            <person name="Pratt R.J."/>
            <person name="Osmani S.A."/>
            <person name="DeSouza C.P.C."/>
            <person name="Glass N.L."/>
            <person name="Orbach M.J."/>
            <person name="Berglund J.A."/>
            <person name="Voelker R."/>
            <person name="Yarden O."/>
            <person name="Plamann M."/>
            <person name="Seiler S."/>
            <person name="Dunlap J.C."/>
            <person name="Radford A."/>
            <person name="Aramayo R."/>
            <person name="Natvig D.O."/>
            <person name="Alex L.A."/>
            <person name="Mannhaupt G."/>
            <person name="Ebbole D.J."/>
            <person name="Freitag M."/>
            <person name="Paulsen I."/>
            <person name="Sachs M.S."/>
            <person name="Lander E.S."/>
            <person name="Nusbaum C."/>
            <person name="Birren B.W."/>
        </authorList>
    </citation>
    <scope>NUCLEOTIDE SEQUENCE [LARGE SCALE GENOMIC DNA]</scope>
    <source>
        <strain>ATCC 24698 / 74-OR23-1A / CBS 708.71 / DSM 1257 / FGSC 987</strain>
    </source>
</reference>
<reference key="2">
    <citation type="journal article" date="2012" name="Biotechnol. Biofuels">
        <title>Production of four Neurospora crassa lytic polysaccharide monooxygenases in Pichia pastoris monitored by a fluorimetric assay.</title>
        <authorList>
            <person name="Kittl R."/>
            <person name="Kracher D."/>
            <person name="Burgstaller D."/>
            <person name="Haltrich D."/>
            <person name="Ludwig R."/>
        </authorList>
    </citation>
    <scope>INDUCTION</scope>
    <scope>SUBCELLULAR LOCATION</scope>
    <scope>FUNCTION</scope>
</reference>
<reference key="3">
    <citation type="journal article" date="2022" name="Appl. Environ. Microbiol.">
        <title>Comparison of six lytic polysaccharide monooxygenases from Thermothielavioides terrestris shows that functional variation underlies the multiplicity of LPMO genes in filamentous fungi.</title>
        <authorList>
            <person name="Tolgo M."/>
            <person name="Hegnar O.A."/>
            <person name="Oestby H."/>
            <person name="Varnai A."/>
            <person name="Vilaplana F."/>
            <person name="Eijsink V.G.H."/>
            <person name="Olsson L."/>
        </authorList>
    </citation>
    <scope>IDENTIFICATION</scope>
</reference>
<proteinExistence type="evidence at transcript level"/>
<accession>Q7SHD9</accession>
<feature type="signal peptide" evidence="3">
    <location>
        <begin position="1"/>
        <end position="20"/>
    </location>
</feature>
<feature type="chain" id="PRO_5004291304" description="AA9 family lytic polysaccharide monooxygenase J">
    <location>
        <begin position="21"/>
        <end position="344"/>
    </location>
</feature>
<feature type="domain" description="CBM1" evidence="4">
    <location>
        <begin position="304"/>
        <end position="341"/>
    </location>
</feature>
<feature type="region of interest" description="Disordered" evidence="5">
    <location>
        <begin position="272"/>
        <end position="301"/>
    </location>
</feature>
<feature type="compositionally biased region" description="Low complexity" evidence="5">
    <location>
        <begin position="285"/>
        <end position="301"/>
    </location>
</feature>
<feature type="binding site" evidence="2">
    <location>
        <position position="21"/>
    </location>
    <ligand>
        <name>Cu(2+)</name>
        <dbReference type="ChEBI" id="CHEBI:29036"/>
    </ligand>
</feature>
<feature type="binding site" evidence="2">
    <location>
        <position position="99"/>
    </location>
    <ligand>
        <name>Cu(2+)</name>
        <dbReference type="ChEBI" id="CHEBI:29036"/>
    </ligand>
</feature>
<feature type="binding site" evidence="1">
    <location>
        <position position="180"/>
    </location>
    <ligand>
        <name>O2</name>
        <dbReference type="ChEBI" id="CHEBI:15379"/>
    </ligand>
</feature>
<feature type="binding site" evidence="1">
    <location>
        <position position="189"/>
    </location>
    <ligand>
        <name>O2</name>
        <dbReference type="ChEBI" id="CHEBI:15379"/>
    </ligand>
</feature>
<feature type="binding site" evidence="2">
    <location>
        <position position="191"/>
    </location>
    <ligand>
        <name>Cu(2+)</name>
        <dbReference type="ChEBI" id="CHEBI:29036"/>
    </ligand>
</feature>
<feature type="disulfide bond" evidence="2">
    <location>
        <begin position="58"/>
        <end position="194"/>
    </location>
</feature>
<gene>
    <name type="primary">gh61-10</name>
    <name evidence="8" type="synonym">LPMO9J</name>
    <name evidence="7" type="synonym">PMO-01867</name>
    <name type="ORF">NCU01867</name>
</gene>
<keyword id="KW-0119">Carbohydrate metabolism</keyword>
<keyword id="KW-0136">Cellulose degradation</keyword>
<keyword id="KW-0186">Copper</keyword>
<keyword id="KW-1015">Disulfide bond</keyword>
<keyword id="KW-0479">Metal-binding</keyword>
<keyword id="KW-0503">Monooxygenase</keyword>
<keyword id="KW-0560">Oxidoreductase</keyword>
<keyword id="KW-0624">Polysaccharide degradation</keyword>
<keyword id="KW-1185">Reference proteome</keyword>
<keyword id="KW-0964">Secreted</keyword>
<keyword id="KW-0732">Signal</keyword>
<sequence>MKSSLLVVLTAGLAVRDAIAHAIFQQLWVDGVDYGSTCNRLPTSNSPVTNVGSRDVVCNAGTRGVSGKCPVKAGGTVTVEMHQQPGDRSCKSEAIGGAHWGPVQIYLSKVSDASTADGSSGGWFKIFSDAWSKKSGGRVGDDDNWGTRDLNACCGRMDVLIPKDLPSGDYLLRAEALALHTAGQSGGAQFYISCYQITVSGGGSANYATVKFPGAYRASDPGIQINIHAVVSNYVAPGPAVVAGGVTKQAGSGCIGCESTCKVGSSPSAVAPGGKPASGGSDGNAPEVAEPSGGEGSPSAPGACEVAAYGQCGGDQYSGCTQCASGYTCKAVSPPYYSQCAPTS</sequence>
<dbReference type="EC" id="1.14.99.56" evidence="10"/>
<dbReference type="EMBL" id="CM002236">
    <property type="protein sequence ID" value="EAA36262.1"/>
    <property type="molecule type" value="Genomic_DNA"/>
</dbReference>
<dbReference type="RefSeq" id="XP_965498.1">
    <property type="nucleotide sequence ID" value="XM_960405.1"/>
</dbReference>
<dbReference type="SMR" id="Q7SHD9"/>
<dbReference type="STRING" id="367110.Q7SHD9"/>
<dbReference type="CAZy" id="AA9">
    <property type="family name" value="Auxiliary Activities 9"/>
</dbReference>
<dbReference type="CAZy" id="CBM1">
    <property type="family name" value="Carbohydrate-Binding Module Family 1"/>
</dbReference>
<dbReference type="PaxDb" id="5141-EFNCRP00000001104"/>
<dbReference type="EnsemblFungi" id="EAA36262">
    <property type="protein sequence ID" value="EAA36262"/>
    <property type="gene ID" value="NCU01867"/>
</dbReference>
<dbReference type="GeneID" id="3881651"/>
<dbReference type="KEGG" id="ncr:NCU01867"/>
<dbReference type="VEuPathDB" id="FungiDB:NCU01867"/>
<dbReference type="HOGENOM" id="CLU_031730_0_1_1"/>
<dbReference type="InParanoid" id="Q7SHD9"/>
<dbReference type="OrthoDB" id="3238762at2759"/>
<dbReference type="Proteomes" id="UP000001805">
    <property type="component" value="Chromosome 1, Linkage Group I"/>
</dbReference>
<dbReference type="GO" id="GO:0005576">
    <property type="term" value="C:extracellular region"/>
    <property type="evidence" value="ECO:0007669"/>
    <property type="project" value="UniProtKB-SubCell"/>
</dbReference>
<dbReference type="GO" id="GO:0030248">
    <property type="term" value="F:cellulose binding"/>
    <property type="evidence" value="ECO:0007669"/>
    <property type="project" value="InterPro"/>
</dbReference>
<dbReference type="GO" id="GO:0046872">
    <property type="term" value="F:metal ion binding"/>
    <property type="evidence" value="ECO:0007669"/>
    <property type="project" value="UniProtKB-KW"/>
</dbReference>
<dbReference type="GO" id="GO:0004497">
    <property type="term" value="F:monooxygenase activity"/>
    <property type="evidence" value="ECO:0007669"/>
    <property type="project" value="UniProtKB-KW"/>
</dbReference>
<dbReference type="GO" id="GO:0030245">
    <property type="term" value="P:cellulose catabolic process"/>
    <property type="evidence" value="ECO:0007669"/>
    <property type="project" value="UniProtKB-KW"/>
</dbReference>
<dbReference type="CDD" id="cd21175">
    <property type="entry name" value="LPMO_AA9"/>
    <property type="match status" value="1"/>
</dbReference>
<dbReference type="Gene3D" id="2.70.50.70">
    <property type="match status" value="1"/>
</dbReference>
<dbReference type="InterPro" id="IPR049892">
    <property type="entry name" value="AA9"/>
</dbReference>
<dbReference type="InterPro" id="IPR005103">
    <property type="entry name" value="AA9_LPMO"/>
</dbReference>
<dbReference type="InterPro" id="IPR035971">
    <property type="entry name" value="CBD_sf"/>
</dbReference>
<dbReference type="InterPro" id="IPR000254">
    <property type="entry name" value="Cellulose-bd_dom_fun"/>
</dbReference>
<dbReference type="PANTHER" id="PTHR33353:SF9">
    <property type="entry name" value="ENDOGLUCANASE II"/>
    <property type="match status" value="1"/>
</dbReference>
<dbReference type="PANTHER" id="PTHR33353">
    <property type="entry name" value="PUTATIVE (AFU_ORTHOLOGUE AFUA_1G12560)-RELATED"/>
    <property type="match status" value="1"/>
</dbReference>
<dbReference type="Pfam" id="PF03443">
    <property type="entry name" value="AA9"/>
    <property type="match status" value="1"/>
</dbReference>
<dbReference type="Pfam" id="PF00734">
    <property type="entry name" value="CBM_1"/>
    <property type="match status" value="1"/>
</dbReference>
<dbReference type="SMART" id="SM00236">
    <property type="entry name" value="fCBD"/>
    <property type="match status" value="1"/>
</dbReference>
<dbReference type="SUPFAM" id="SSF57180">
    <property type="entry name" value="Cellulose-binding domain"/>
    <property type="match status" value="1"/>
</dbReference>
<dbReference type="PROSITE" id="PS51164">
    <property type="entry name" value="CBM1_2"/>
    <property type="match status" value="1"/>
</dbReference>
<protein>
    <recommendedName>
        <fullName evidence="8">AA9 family lytic polysaccharide monooxygenase J</fullName>
        <shortName evidence="8">LPMO9J</shortName>
        <ecNumber evidence="10">1.14.99.56</ecNumber>
    </recommendedName>
    <alternativeName>
        <fullName evidence="9">Endo-1,4-beta-glucanase LPMO9J</fullName>
        <shortName evidence="9">Endoglucanase LPMO9J</shortName>
    </alternativeName>
    <alternativeName>
        <fullName evidence="9">Glycosyl hydrolase 61 family protein 10</fullName>
    </alternativeName>
</protein>
<evidence type="ECO:0000250" key="1">
    <source>
        <dbReference type="UniProtKB" id="Q1K8B6"/>
    </source>
</evidence>
<evidence type="ECO:0000250" key="2">
    <source>
        <dbReference type="UniProtKB" id="Q7SHI8"/>
    </source>
</evidence>
<evidence type="ECO:0000255" key="3"/>
<evidence type="ECO:0000255" key="4">
    <source>
        <dbReference type="PROSITE-ProRule" id="PRU00597"/>
    </source>
</evidence>
<evidence type="ECO:0000256" key="5">
    <source>
        <dbReference type="SAM" id="MobiDB-lite"/>
    </source>
</evidence>
<evidence type="ECO:0000269" key="6">
    <source>
    </source>
</evidence>
<evidence type="ECO:0000303" key="7">
    <source>
    </source>
</evidence>
<evidence type="ECO:0000303" key="8">
    <source>
    </source>
</evidence>
<evidence type="ECO:0000305" key="9"/>
<evidence type="ECO:0000305" key="10">
    <source>
    </source>
</evidence>
<comment type="function">
    <text evidence="2 6">Lytic polysaccharide monooxygenase (LPMO) that depolymerizes crystalline and amorphous polysaccharides via the oxidation of scissile alpha- or beta-(1-4)-glycosidic bonds, yielding C4 oxidation products (PubMed:23102010). Catalysis by LPMOs requires the reduction of the active-site copper from Cu(II) to Cu(I) by a reducing agent and H(2)O(2) or O(2) as a cosubstrate (By similarity).</text>
</comment>
<comment type="catalytic activity">
    <reaction evidence="10">
        <text>[(1-&gt;4)-beta-D-glucosyl]n+m + reduced acceptor + O2 = 4-dehydro-beta-D-glucosyl-[(1-&gt;4)-beta-D-glucosyl]n-1 + [(1-&gt;4)-beta-D-glucosyl]m + acceptor + H2O.</text>
        <dbReference type="EC" id="1.14.99.56"/>
    </reaction>
</comment>
<comment type="cofactor">
    <cofactor evidence="2">
        <name>Cu(2+)</name>
        <dbReference type="ChEBI" id="CHEBI:29036"/>
    </cofactor>
    <text evidence="2">Binds 1 copper ion per subunit.</text>
</comment>
<comment type="subcellular location">
    <subcellularLocation>
        <location evidence="6">Secreted</location>
    </subcellularLocation>
</comment>
<comment type="domain">
    <text evidence="2">Has a modular structure: an endo-beta-1,4-glucanase catalytic module at the N-terminus, a linker rich in serines and threonines, and a C-terminal carbohydrate-binding module (CBM). The CBM domain is essential for binding to and subsequent oxidative degradation of polysaccharide substrate.</text>
</comment>
<comment type="biotechnology">
    <text evidence="2">Lignocellulose is the most abundant polymeric composite on Earth and is a recalcitrant but promising renewable substrate for industrial biotechnology applications. Together with cellobiose dehydrogenases (CDHs) an enzymatic system capable of oxidative cellulose cleavage is formed, which increases the efficiency of cellulases and put LPMOs at focus of biofuel research.</text>
</comment>
<comment type="similarity">
    <text evidence="9">Belongs to the polysaccharide monooxygenase AA9 family.</text>
</comment>
<name>LP9J_NEUCR</name>